<gene>
    <name type="primary">Snrnp25</name>
</gene>
<sequence>MVVQDPLLCDLPIQVTLEEVNSQIALEYGQAMTVRVCKMDGEVMPVVVVQNATVLDLKKAIQRYVQLKQEREGGVQHISWSYVWRTYHLTSAGEKLTEDRKKLRDYGIRNRDEVSFIKKLRQK</sequence>
<feature type="chain" id="PRO_0000114925" description="U11/U12 small nuclear ribonucleoprotein 25 kDa protein">
    <location>
        <begin position="1"/>
        <end position="123"/>
    </location>
</feature>
<feature type="domain" description="Ubiquitin-like">
    <location>
        <begin position="32"/>
        <end position="123"/>
    </location>
</feature>
<feature type="sequence conflict" description="In Ref. 2; BAB31728." evidence="2" ref="2">
    <original>R</original>
    <variation>G</variation>
    <location>
        <position position="121"/>
    </location>
</feature>
<feature type="strand" evidence="3">
    <location>
        <begin position="32"/>
        <end position="37"/>
    </location>
</feature>
<feature type="strand" evidence="3">
    <location>
        <begin position="39"/>
        <end position="41"/>
    </location>
</feature>
<feature type="strand" evidence="3">
    <location>
        <begin position="43"/>
        <end position="48"/>
    </location>
</feature>
<feature type="helix" evidence="3">
    <location>
        <begin position="54"/>
        <end position="71"/>
    </location>
</feature>
<feature type="helix" evidence="3">
    <location>
        <begin position="80"/>
        <end position="84"/>
    </location>
</feature>
<feature type="strand" evidence="3">
    <location>
        <begin position="87"/>
        <end position="93"/>
    </location>
</feature>
<feature type="strand" evidence="3">
    <location>
        <begin position="99"/>
        <end position="102"/>
    </location>
</feature>
<feature type="helix" evidence="3">
    <location>
        <begin position="103"/>
        <end position="105"/>
    </location>
</feature>
<feature type="strand" evidence="3">
    <location>
        <begin position="110"/>
        <end position="118"/>
    </location>
</feature>
<accession>Q8VIK1</accession>
<accession>Q9CX75</accession>
<keyword id="KW-0002">3D-structure</keyword>
<keyword id="KW-0507">mRNA processing</keyword>
<keyword id="KW-0508">mRNA splicing</keyword>
<keyword id="KW-0539">Nucleus</keyword>
<keyword id="KW-1185">Reference proteome</keyword>
<keyword id="KW-0747">Spliceosome</keyword>
<evidence type="ECO:0000250" key="1"/>
<evidence type="ECO:0000305" key="2"/>
<evidence type="ECO:0007829" key="3">
    <source>
        <dbReference type="PDB" id="1V2Y"/>
    </source>
</evidence>
<organism>
    <name type="scientific">Mus musculus</name>
    <name type="common">Mouse</name>
    <dbReference type="NCBI Taxonomy" id="10090"/>
    <lineage>
        <taxon>Eukaryota</taxon>
        <taxon>Metazoa</taxon>
        <taxon>Chordata</taxon>
        <taxon>Craniata</taxon>
        <taxon>Vertebrata</taxon>
        <taxon>Euteleostomi</taxon>
        <taxon>Mammalia</taxon>
        <taxon>Eutheria</taxon>
        <taxon>Euarchontoglires</taxon>
        <taxon>Glires</taxon>
        <taxon>Rodentia</taxon>
        <taxon>Myomorpha</taxon>
        <taxon>Muroidea</taxon>
        <taxon>Muridae</taxon>
        <taxon>Murinae</taxon>
        <taxon>Mus</taxon>
        <taxon>Mus</taxon>
    </lineage>
</organism>
<protein>
    <recommendedName>
        <fullName>U11/U12 small nuclear ribonucleoprotein 25 kDa protein</fullName>
        <shortName>U11/U12 snRNP 25 kDa protein</shortName>
    </recommendedName>
</protein>
<dbReference type="EMBL" id="AY016021">
    <property type="protein sequence ID" value="AAL32366.1"/>
    <property type="molecule type" value="Genomic_DNA"/>
</dbReference>
<dbReference type="EMBL" id="AK019452">
    <property type="protein sequence ID" value="BAB31728.1"/>
    <property type="molecule type" value="mRNA"/>
</dbReference>
<dbReference type="EMBL" id="BC028766">
    <property type="protein sequence ID" value="AAH28766.1"/>
    <property type="molecule type" value="mRNA"/>
</dbReference>
<dbReference type="CCDS" id="CCDS24518.1"/>
<dbReference type="RefSeq" id="NP_084369.2">
    <property type="nucleotide sequence ID" value="NM_030093.3"/>
</dbReference>
<dbReference type="PDB" id="1V2Y">
    <property type="method" value="NMR"/>
    <property type="chains" value="A=32-123"/>
</dbReference>
<dbReference type="PDBsum" id="1V2Y"/>
<dbReference type="SMR" id="Q8VIK1"/>
<dbReference type="FunCoup" id="Q8VIK1">
    <property type="interactions" value="1769"/>
</dbReference>
<dbReference type="STRING" id="10090.ENSMUSP00000046654"/>
<dbReference type="PhosphoSitePlus" id="Q8VIK1"/>
<dbReference type="PaxDb" id="10090-ENSMUSP00000046654"/>
<dbReference type="ProteomicsDB" id="257539"/>
<dbReference type="Antibodypedia" id="22444">
    <property type="antibodies" value="47 antibodies from 13 providers"/>
</dbReference>
<dbReference type="Ensembl" id="ENSMUST00000039601.10">
    <property type="protein sequence ID" value="ENSMUSP00000046654.4"/>
    <property type="gene ID" value="ENSMUSG00000040767.12"/>
</dbReference>
<dbReference type="GeneID" id="78372"/>
<dbReference type="KEGG" id="mmu:78372"/>
<dbReference type="UCSC" id="uc007ija.2">
    <property type="organism name" value="mouse"/>
</dbReference>
<dbReference type="AGR" id="MGI:1925622"/>
<dbReference type="CTD" id="79622"/>
<dbReference type="MGI" id="MGI:1925622">
    <property type="gene designation" value="Snrnp25"/>
</dbReference>
<dbReference type="VEuPathDB" id="HostDB:ENSMUSG00000040767"/>
<dbReference type="eggNOG" id="ENOG502RXSI">
    <property type="taxonomic scope" value="Eukaryota"/>
</dbReference>
<dbReference type="GeneTree" id="ENSGT00390000002628"/>
<dbReference type="HOGENOM" id="CLU_094998_1_0_1"/>
<dbReference type="InParanoid" id="Q8VIK1"/>
<dbReference type="OMA" id="KHVWANF"/>
<dbReference type="OrthoDB" id="72819at2759"/>
<dbReference type="PhylomeDB" id="Q8VIK1"/>
<dbReference type="TreeFam" id="TF329506"/>
<dbReference type="Reactome" id="R-MMU-72165">
    <property type="pathway name" value="mRNA Splicing - Minor Pathway"/>
</dbReference>
<dbReference type="BioGRID-ORCS" id="78372">
    <property type="hits" value="26 hits in 80 CRISPR screens"/>
</dbReference>
<dbReference type="ChiTaRS" id="Snrnp25">
    <property type="organism name" value="mouse"/>
</dbReference>
<dbReference type="EvolutionaryTrace" id="Q8VIK1"/>
<dbReference type="PRO" id="PR:Q8VIK1"/>
<dbReference type="Proteomes" id="UP000000589">
    <property type="component" value="Chromosome 11"/>
</dbReference>
<dbReference type="RNAct" id="Q8VIK1">
    <property type="molecule type" value="protein"/>
</dbReference>
<dbReference type="Bgee" id="ENSMUSG00000040767">
    <property type="expression patterns" value="Expressed in ileal epithelium and 258 other cell types or tissues"/>
</dbReference>
<dbReference type="ExpressionAtlas" id="Q8VIK1">
    <property type="expression patterns" value="baseline and differential"/>
</dbReference>
<dbReference type="GO" id="GO:0005634">
    <property type="term" value="C:nucleus"/>
    <property type="evidence" value="ECO:0000250"/>
    <property type="project" value="MGI"/>
</dbReference>
<dbReference type="GO" id="GO:0005689">
    <property type="term" value="C:U12-type spliceosomal complex"/>
    <property type="evidence" value="ECO:0000250"/>
    <property type="project" value="HGNC-UCL"/>
</dbReference>
<dbReference type="GO" id="GO:0000398">
    <property type="term" value="P:mRNA splicing, via spliceosome"/>
    <property type="evidence" value="ECO:0007669"/>
    <property type="project" value="InterPro"/>
</dbReference>
<dbReference type="CDD" id="cd17058">
    <property type="entry name" value="Ubl_SNRNP25"/>
    <property type="match status" value="1"/>
</dbReference>
<dbReference type="FunFam" id="3.10.20.90:FF:000194">
    <property type="entry name" value="U11/U12 small nuclear ribonucleoprotein 25 kDa protein"/>
    <property type="match status" value="1"/>
</dbReference>
<dbReference type="Gene3D" id="3.10.20.90">
    <property type="entry name" value="Phosphatidylinositol 3-kinase Catalytic Subunit, Chain A, domain 1"/>
    <property type="match status" value="1"/>
</dbReference>
<dbReference type="InterPro" id="IPR039690">
    <property type="entry name" value="SNRNP25"/>
</dbReference>
<dbReference type="InterPro" id="IPR040610">
    <property type="entry name" value="SNRNP25_ubiquitin"/>
</dbReference>
<dbReference type="InterPro" id="IPR029071">
    <property type="entry name" value="Ubiquitin-like_domsf"/>
</dbReference>
<dbReference type="PANTHER" id="PTHR14942">
    <property type="entry name" value="U11/U12 SMALL NUCLEAR RIBONUCLEOPROTEIN 25 KDA PROTEIN"/>
    <property type="match status" value="1"/>
</dbReference>
<dbReference type="PANTHER" id="PTHR14942:SF0">
    <property type="entry name" value="U11_U12 SMALL NUCLEAR RIBONUCLEOPROTEIN 25 KDA PROTEIN"/>
    <property type="match status" value="1"/>
</dbReference>
<dbReference type="Pfam" id="PF18036">
    <property type="entry name" value="Ubiquitin_4"/>
    <property type="match status" value="1"/>
</dbReference>
<dbReference type="SUPFAM" id="SSF54236">
    <property type="entry name" value="Ubiquitin-like"/>
    <property type="match status" value="1"/>
</dbReference>
<reference key="1">
    <citation type="journal article" date="2001" name="Hum. Mol. Genet.">
        <title>Comparative genome analysis delimits a chromosomal domain and identifies key regulatory elements in the alpha globin cluster.</title>
        <authorList>
            <person name="Flint J."/>
            <person name="Tufarelli C."/>
            <person name="Peden J."/>
            <person name="Clark K."/>
            <person name="Daniels R.J."/>
            <person name="Hardison R."/>
            <person name="Miller W."/>
            <person name="Philipsen S."/>
            <person name="Tan-Un K.C."/>
            <person name="McMorrow T."/>
            <person name="Frampton J."/>
            <person name="Alter B.P."/>
            <person name="Frischauf A.-M."/>
            <person name="Higgs D.R."/>
        </authorList>
    </citation>
    <scope>NUCLEOTIDE SEQUENCE [GENOMIC DNA]</scope>
</reference>
<reference key="2">
    <citation type="journal article" date="2005" name="Science">
        <title>The transcriptional landscape of the mammalian genome.</title>
        <authorList>
            <person name="Carninci P."/>
            <person name="Kasukawa T."/>
            <person name="Katayama S."/>
            <person name="Gough J."/>
            <person name="Frith M.C."/>
            <person name="Maeda N."/>
            <person name="Oyama R."/>
            <person name="Ravasi T."/>
            <person name="Lenhard B."/>
            <person name="Wells C."/>
            <person name="Kodzius R."/>
            <person name="Shimokawa K."/>
            <person name="Bajic V.B."/>
            <person name="Brenner S.E."/>
            <person name="Batalov S."/>
            <person name="Forrest A.R."/>
            <person name="Zavolan M."/>
            <person name="Davis M.J."/>
            <person name="Wilming L.G."/>
            <person name="Aidinis V."/>
            <person name="Allen J.E."/>
            <person name="Ambesi-Impiombato A."/>
            <person name="Apweiler R."/>
            <person name="Aturaliya R.N."/>
            <person name="Bailey T.L."/>
            <person name="Bansal M."/>
            <person name="Baxter L."/>
            <person name="Beisel K.W."/>
            <person name="Bersano T."/>
            <person name="Bono H."/>
            <person name="Chalk A.M."/>
            <person name="Chiu K.P."/>
            <person name="Choudhary V."/>
            <person name="Christoffels A."/>
            <person name="Clutterbuck D.R."/>
            <person name="Crowe M.L."/>
            <person name="Dalla E."/>
            <person name="Dalrymple B.P."/>
            <person name="de Bono B."/>
            <person name="Della Gatta G."/>
            <person name="di Bernardo D."/>
            <person name="Down T."/>
            <person name="Engstrom P."/>
            <person name="Fagiolini M."/>
            <person name="Faulkner G."/>
            <person name="Fletcher C.F."/>
            <person name="Fukushima T."/>
            <person name="Furuno M."/>
            <person name="Futaki S."/>
            <person name="Gariboldi M."/>
            <person name="Georgii-Hemming P."/>
            <person name="Gingeras T.R."/>
            <person name="Gojobori T."/>
            <person name="Green R.E."/>
            <person name="Gustincich S."/>
            <person name="Harbers M."/>
            <person name="Hayashi Y."/>
            <person name="Hensch T.K."/>
            <person name="Hirokawa N."/>
            <person name="Hill D."/>
            <person name="Huminiecki L."/>
            <person name="Iacono M."/>
            <person name="Ikeo K."/>
            <person name="Iwama A."/>
            <person name="Ishikawa T."/>
            <person name="Jakt M."/>
            <person name="Kanapin A."/>
            <person name="Katoh M."/>
            <person name="Kawasawa Y."/>
            <person name="Kelso J."/>
            <person name="Kitamura H."/>
            <person name="Kitano H."/>
            <person name="Kollias G."/>
            <person name="Krishnan S.P."/>
            <person name="Kruger A."/>
            <person name="Kummerfeld S.K."/>
            <person name="Kurochkin I.V."/>
            <person name="Lareau L.F."/>
            <person name="Lazarevic D."/>
            <person name="Lipovich L."/>
            <person name="Liu J."/>
            <person name="Liuni S."/>
            <person name="McWilliam S."/>
            <person name="Madan Babu M."/>
            <person name="Madera M."/>
            <person name="Marchionni L."/>
            <person name="Matsuda H."/>
            <person name="Matsuzawa S."/>
            <person name="Miki H."/>
            <person name="Mignone F."/>
            <person name="Miyake S."/>
            <person name="Morris K."/>
            <person name="Mottagui-Tabar S."/>
            <person name="Mulder N."/>
            <person name="Nakano N."/>
            <person name="Nakauchi H."/>
            <person name="Ng P."/>
            <person name="Nilsson R."/>
            <person name="Nishiguchi S."/>
            <person name="Nishikawa S."/>
            <person name="Nori F."/>
            <person name="Ohara O."/>
            <person name="Okazaki Y."/>
            <person name="Orlando V."/>
            <person name="Pang K.C."/>
            <person name="Pavan W.J."/>
            <person name="Pavesi G."/>
            <person name="Pesole G."/>
            <person name="Petrovsky N."/>
            <person name="Piazza S."/>
            <person name="Reed J."/>
            <person name="Reid J.F."/>
            <person name="Ring B.Z."/>
            <person name="Ringwald M."/>
            <person name="Rost B."/>
            <person name="Ruan Y."/>
            <person name="Salzberg S.L."/>
            <person name="Sandelin A."/>
            <person name="Schneider C."/>
            <person name="Schoenbach C."/>
            <person name="Sekiguchi K."/>
            <person name="Semple C.A."/>
            <person name="Seno S."/>
            <person name="Sessa L."/>
            <person name="Sheng Y."/>
            <person name="Shibata Y."/>
            <person name="Shimada H."/>
            <person name="Shimada K."/>
            <person name="Silva D."/>
            <person name="Sinclair B."/>
            <person name="Sperling S."/>
            <person name="Stupka E."/>
            <person name="Sugiura K."/>
            <person name="Sultana R."/>
            <person name="Takenaka Y."/>
            <person name="Taki K."/>
            <person name="Tammoja K."/>
            <person name="Tan S.L."/>
            <person name="Tang S."/>
            <person name="Taylor M.S."/>
            <person name="Tegner J."/>
            <person name="Teichmann S.A."/>
            <person name="Ueda H.R."/>
            <person name="van Nimwegen E."/>
            <person name="Verardo R."/>
            <person name="Wei C.L."/>
            <person name="Yagi K."/>
            <person name="Yamanishi H."/>
            <person name="Zabarovsky E."/>
            <person name="Zhu S."/>
            <person name="Zimmer A."/>
            <person name="Hide W."/>
            <person name="Bult C."/>
            <person name="Grimmond S.M."/>
            <person name="Teasdale R.D."/>
            <person name="Liu E.T."/>
            <person name="Brusic V."/>
            <person name="Quackenbush J."/>
            <person name="Wahlestedt C."/>
            <person name="Mattick J.S."/>
            <person name="Hume D.A."/>
            <person name="Kai C."/>
            <person name="Sasaki D."/>
            <person name="Tomaru Y."/>
            <person name="Fukuda S."/>
            <person name="Kanamori-Katayama M."/>
            <person name="Suzuki M."/>
            <person name="Aoki J."/>
            <person name="Arakawa T."/>
            <person name="Iida J."/>
            <person name="Imamura K."/>
            <person name="Itoh M."/>
            <person name="Kato T."/>
            <person name="Kawaji H."/>
            <person name="Kawagashira N."/>
            <person name="Kawashima T."/>
            <person name="Kojima M."/>
            <person name="Kondo S."/>
            <person name="Konno H."/>
            <person name="Nakano K."/>
            <person name="Ninomiya N."/>
            <person name="Nishio T."/>
            <person name="Okada M."/>
            <person name="Plessy C."/>
            <person name="Shibata K."/>
            <person name="Shiraki T."/>
            <person name="Suzuki S."/>
            <person name="Tagami M."/>
            <person name="Waki K."/>
            <person name="Watahiki A."/>
            <person name="Okamura-Oho Y."/>
            <person name="Suzuki H."/>
            <person name="Kawai J."/>
            <person name="Hayashizaki Y."/>
        </authorList>
    </citation>
    <scope>NUCLEOTIDE SEQUENCE [LARGE SCALE MRNA]</scope>
    <source>
        <strain>C57BL/6J</strain>
        <tissue>Embryonic head</tissue>
    </source>
</reference>
<reference key="3">
    <citation type="journal article" date="2004" name="Genome Res.">
        <title>The status, quality, and expansion of the NIH full-length cDNA project: the Mammalian Gene Collection (MGC).</title>
        <authorList>
            <consortium name="The MGC Project Team"/>
        </authorList>
    </citation>
    <scope>NUCLEOTIDE SEQUENCE [LARGE SCALE MRNA]</scope>
    <source>
        <strain>C57BL/6J</strain>
        <tissue>Mammary gland</tissue>
    </source>
</reference>
<reference key="4">
    <citation type="submission" date="2004-04" db="PDB data bank">
        <title>Solution structure of mouse hypothetical gene (RIKEN cDNA 3300001G02) product homologous to ubiquitin fold.</title>
        <authorList>
            <consortium name="RIKEN structural genomics initiative (RSGI)"/>
        </authorList>
    </citation>
    <scope>STRUCTURE BY NMR OF 32-123</scope>
</reference>
<proteinExistence type="evidence at protein level"/>
<name>SNR25_MOUSE</name>
<comment type="subunit">
    <text evidence="1">Component of the U11/U12 snRNPs that are part of the U12-type spliceosome.</text>
</comment>
<comment type="subcellular location">
    <subcellularLocation>
        <location evidence="1">Nucleus</location>
    </subcellularLocation>
</comment>